<protein>
    <recommendedName>
        <fullName>Complement C1q subcomponent subunit C</fullName>
    </recommendedName>
</protein>
<feature type="signal peptide" evidence="1">
    <location>
        <begin position="1"/>
        <end position="29"/>
    </location>
</feature>
<feature type="chain" id="PRO_0000003525" description="Complement C1q subcomponent subunit C">
    <location>
        <begin position="30"/>
        <end position="246"/>
    </location>
</feature>
<feature type="domain" description="Collagen-like">
    <location>
        <begin position="32"/>
        <end position="113"/>
    </location>
</feature>
<feature type="domain" description="C1q" evidence="2">
    <location>
        <begin position="116"/>
        <end position="246"/>
    </location>
</feature>
<feature type="region of interest" description="Disordered" evidence="3">
    <location>
        <begin position="44"/>
        <end position="116"/>
    </location>
</feature>
<feature type="compositionally biased region" description="Pro residues" evidence="3">
    <location>
        <begin position="99"/>
        <end position="108"/>
    </location>
</feature>
<feature type="modified residue" description="4-hydroxyproline" evidence="1">
    <location>
        <position position="37"/>
    </location>
</feature>
<feature type="modified residue" description="4-hydroxyproline" evidence="1">
    <location>
        <position position="40"/>
    </location>
</feature>
<feature type="modified residue" description="4-hydroxyproline" evidence="1">
    <location>
        <position position="43"/>
    </location>
</feature>
<feature type="modified residue" description="4-hydroxyproline" evidence="1">
    <location>
        <position position="46"/>
    </location>
</feature>
<feature type="modified residue" description="4-hydroxyproline" evidence="1">
    <location>
        <position position="64"/>
    </location>
</feature>
<feature type="modified residue" description="5-hydroxylysine" evidence="1">
    <location>
        <position position="76"/>
    </location>
</feature>
<feature type="modified residue" description="4-hydroxyproline" evidence="1">
    <location>
        <position position="82"/>
    </location>
</feature>
<feature type="modified residue" description="4-hydroxyproline" evidence="1">
    <location>
        <position position="97"/>
    </location>
</feature>
<feature type="modified residue" description="4-hydroxyproline" evidence="1">
    <location>
        <position position="100"/>
    </location>
</feature>
<feature type="modified residue" description="4-hydroxyproline" evidence="1">
    <location>
        <position position="106"/>
    </location>
</feature>
<feature type="glycosylation site" description="O-linked (Gal...) hydroxylysine" evidence="1">
    <location>
        <position position="76"/>
    </location>
</feature>
<feature type="disulfide bond" description="Interchain" evidence="1">
    <location>
        <position position="33"/>
    </location>
</feature>
<feature type="disulfide bond" evidence="1">
    <location>
        <begin position="180"/>
        <end position="194"/>
    </location>
</feature>
<feature type="sequence conflict" description="In Ref. 1; CAA46993, 2; CAA63535 and 4; AAH43945/AAH54443." evidence="4" ref="1 2 4">
    <original>P</original>
    <variation>Q</variation>
    <location>
        <position position="10"/>
    </location>
</feature>
<feature type="sequence conflict" description="In Ref. 1; CAA46993 and 4; AAH43945/AAH54443." evidence="4" ref="1 4">
    <original>R</original>
    <variation>Q</variation>
    <location>
        <position position="70"/>
    </location>
</feature>
<feature type="sequence conflict" description="In Ref. 1; CAA46993 and 4; AAH43945/AAH54443." evidence="4" ref="1 4">
    <original>V</original>
    <variation>A</variation>
    <location>
        <position position="208"/>
    </location>
</feature>
<proteinExistence type="evidence at protein level"/>
<dbReference type="EMBL" id="X66295">
    <property type="protein sequence ID" value="CAA46993.1"/>
    <property type="molecule type" value="mRNA"/>
</dbReference>
<dbReference type="EMBL" id="X92960">
    <property type="protein sequence ID" value="CAA63535.1"/>
    <property type="molecule type" value="Genomic_DNA"/>
</dbReference>
<dbReference type="EMBL" id="AL627214">
    <property type="status" value="NOT_ANNOTATED_CDS"/>
    <property type="molecule type" value="Genomic_DNA"/>
</dbReference>
<dbReference type="EMBL" id="BC043945">
    <property type="protein sequence ID" value="AAH43945.1"/>
    <property type="molecule type" value="mRNA"/>
</dbReference>
<dbReference type="EMBL" id="BC054443">
    <property type="protein sequence ID" value="AAH54443.1"/>
    <property type="molecule type" value="mRNA"/>
</dbReference>
<dbReference type="EMBL" id="BC075724">
    <property type="protein sequence ID" value="AAH75724.1"/>
    <property type="molecule type" value="mRNA"/>
</dbReference>
<dbReference type="CCDS" id="CCDS18811.1"/>
<dbReference type="PIR" id="S29328">
    <property type="entry name" value="S29328"/>
</dbReference>
<dbReference type="RefSeq" id="NP_001406888.1">
    <property type="nucleotide sequence ID" value="NM_001419959.1"/>
</dbReference>
<dbReference type="RefSeq" id="NP_031600.2">
    <property type="nucleotide sequence ID" value="NM_007574.3"/>
</dbReference>
<dbReference type="RefSeq" id="XP_017175416.1">
    <property type="nucleotide sequence ID" value="XM_017319927.1"/>
</dbReference>
<dbReference type="SMR" id="Q02105"/>
<dbReference type="BioGRID" id="198415">
    <property type="interactions" value="13"/>
</dbReference>
<dbReference type="ComplexPortal" id="CPX-4981">
    <property type="entry name" value="Complement component C1q complex"/>
</dbReference>
<dbReference type="FunCoup" id="Q02105">
    <property type="interactions" value="72"/>
</dbReference>
<dbReference type="IntAct" id="Q02105">
    <property type="interactions" value="2"/>
</dbReference>
<dbReference type="MINT" id="Q02105"/>
<dbReference type="STRING" id="10090.ENSMUSP00000036747"/>
<dbReference type="GlyGen" id="Q02105">
    <property type="glycosylation" value="1 site, 1 O-linked glycan (1 site)"/>
</dbReference>
<dbReference type="iPTMnet" id="Q02105"/>
<dbReference type="PhosphoSitePlus" id="Q02105"/>
<dbReference type="SwissPalm" id="Q02105"/>
<dbReference type="CPTAC" id="non-CPTAC-3302"/>
<dbReference type="CPTAC" id="non-CPTAC-3357"/>
<dbReference type="jPOST" id="Q02105"/>
<dbReference type="PaxDb" id="10090-ENSMUSP00000036747"/>
<dbReference type="PeptideAtlas" id="Q02105"/>
<dbReference type="ProteomicsDB" id="273852"/>
<dbReference type="Antibodypedia" id="691">
    <property type="antibodies" value="309 antibodies from 34 providers"/>
</dbReference>
<dbReference type="DNASU" id="12262"/>
<dbReference type="Ensembl" id="ENSMUST00000046332.6">
    <property type="protein sequence ID" value="ENSMUSP00000036747.6"/>
    <property type="gene ID" value="ENSMUSG00000036896.6"/>
</dbReference>
<dbReference type="GeneID" id="12262"/>
<dbReference type="KEGG" id="mmu:12262"/>
<dbReference type="UCSC" id="uc008viq.1">
    <property type="organism name" value="mouse"/>
</dbReference>
<dbReference type="AGR" id="MGI:88225"/>
<dbReference type="CTD" id="714"/>
<dbReference type="MGI" id="MGI:88225">
    <property type="gene designation" value="C1qc"/>
</dbReference>
<dbReference type="VEuPathDB" id="HostDB:ENSMUSG00000036896"/>
<dbReference type="eggNOG" id="ENOG502RZM2">
    <property type="taxonomic scope" value="Eukaryota"/>
</dbReference>
<dbReference type="GeneTree" id="ENSGT00940000161227"/>
<dbReference type="HOGENOM" id="CLU_001074_0_2_1"/>
<dbReference type="InParanoid" id="Q02105"/>
<dbReference type="OMA" id="RGTNEYP"/>
<dbReference type="OrthoDB" id="8964326at2759"/>
<dbReference type="PhylomeDB" id="Q02105"/>
<dbReference type="TreeFam" id="TF329591"/>
<dbReference type="Reactome" id="R-MMU-166663">
    <property type="pathway name" value="Initial triggering of complement"/>
</dbReference>
<dbReference type="Reactome" id="R-MMU-173623">
    <property type="pathway name" value="Classical antibody-mediated complement activation"/>
</dbReference>
<dbReference type="Reactome" id="R-MMU-977606">
    <property type="pathway name" value="Regulation of Complement cascade"/>
</dbReference>
<dbReference type="BioGRID-ORCS" id="12262">
    <property type="hits" value="0 hits in 77 CRISPR screens"/>
</dbReference>
<dbReference type="PRO" id="PR:Q02105"/>
<dbReference type="Proteomes" id="UP000000589">
    <property type="component" value="Chromosome 4"/>
</dbReference>
<dbReference type="RNAct" id="Q02105">
    <property type="molecule type" value="protein"/>
</dbReference>
<dbReference type="Bgee" id="ENSMUSG00000036896">
    <property type="expression patterns" value="Expressed in stroma of bone marrow and 179 other cell types or tissues"/>
</dbReference>
<dbReference type="GO" id="GO:0005581">
    <property type="term" value="C:collagen trimer"/>
    <property type="evidence" value="ECO:0007669"/>
    <property type="project" value="UniProtKB-KW"/>
</dbReference>
<dbReference type="GO" id="GO:0005602">
    <property type="term" value="C:complement component C1 complex"/>
    <property type="evidence" value="ECO:0000303"/>
    <property type="project" value="ComplexPortal"/>
</dbReference>
<dbReference type="GO" id="GO:0062167">
    <property type="term" value="C:complement component C1q complex"/>
    <property type="evidence" value="ECO:0000266"/>
    <property type="project" value="ComplexPortal"/>
</dbReference>
<dbReference type="GO" id="GO:0005576">
    <property type="term" value="C:extracellular region"/>
    <property type="evidence" value="ECO:0000266"/>
    <property type="project" value="ComplexPortal"/>
</dbReference>
<dbReference type="GO" id="GO:0005615">
    <property type="term" value="C:extracellular space"/>
    <property type="evidence" value="ECO:0007005"/>
    <property type="project" value="BHF-UCL"/>
</dbReference>
<dbReference type="GO" id="GO:0098890">
    <property type="term" value="C:extrinsic component of postsynaptic membrane"/>
    <property type="evidence" value="ECO:0000314"/>
    <property type="project" value="SynGO"/>
</dbReference>
<dbReference type="GO" id="GO:0098888">
    <property type="term" value="C:extrinsic component of presynaptic membrane"/>
    <property type="evidence" value="ECO:0000314"/>
    <property type="project" value="SynGO"/>
</dbReference>
<dbReference type="GO" id="GO:0098978">
    <property type="term" value="C:glutamatergic synapse"/>
    <property type="evidence" value="ECO:0000314"/>
    <property type="project" value="SynGO"/>
</dbReference>
<dbReference type="GO" id="GO:0098794">
    <property type="term" value="C:postsynapse"/>
    <property type="evidence" value="ECO:0000316"/>
    <property type="project" value="ARUK-UCL"/>
</dbReference>
<dbReference type="GO" id="GO:0045202">
    <property type="term" value="C:synapse"/>
    <property type="evidence" value="ECO:0000314"/>
    <property type="project" value="ARUK-UCL"/>
</dbReference>
<dbReference type="GO" id="GO:0006958">
    <property type="term" value="P:complement activation, classical pathway"/>
    <property type="evidence" value="ECO:0000266"/>
    <property type="project" value="ComplexPortal"/>
</dbReference>
<dbReference type="GO" id="GO:0045087">
    <property type="term" value="P:innate immune response"/>
    <property type="evidence" value="ECO:0007669"/>
    <property type="project" value="UniProtKB-KW"/>
</dbReference>
<dbReference type="GO" id="GO:0030853">
    <property type="term" value="P:negative regulation of granulocyte differentiation"/>
    <property type="evidence" value="ECO:0007669"/>
    <property type="project" value="Ensembl"/>
</dbReference>
<dbReference type="GO" id="GO:0045650">
    <property type="term" value="P:negative regulation of macrophage differentiation"/>
    <property type="evidence" value="ECO:0007669"/>
    <property type="project" value="Ensembl"/>
</dbReference>
<dbReference type="GO" id="GO:0098883">
    <property type="term" value="P:synapse pruning"/>
    <property type="evidence" value="ECO:0000316"/>
    <property type="project" value="ARUK-UCL"/>
</dbReference>
<dbReference type="FunFam" id="2.60.120.40:FF:000001">
    <property type="entry name" value="Complement C1q B chain"/>
    <property type="match status" value="1"/>
</dbReference>
<dbReference type="Gene3D" id="2.60.120.40">
    <property type="match status" value="1"/>
</dbReference>
<dbReference type="InterPro" id="IPR001073">
    <property type="entry name" value="C1q_dom"/>
</dbReference>
<dbReference type="InterPro" id="IPR008160">
    <property type="entry name" value="Collagen"/>
</dbReference>
<dbReference type="InterPro" id="IPR050392">
    <property type="entry name" value="Collagen/C1q_domain"/>
</dbReference>
<dbReference type="InterPro" id="IPR008983">
    <property type="entry name" value="Tumour_necrosis_fac-like_dom"/>
</dbReference>
<dbReference type="PANTHER" id="PTHR15427:SF29">
    <property type="entry name" value="COMPLEMENT C1Q SUBCOMPONENT SUBUNIT C"/>
    <property type="match status" value="1"/>
</dbReference>
<dbReference type="PANTHER" id="PTHR15427">
    <property type="entry name" value="EMILIN ELASTIN MICROFIBRIL INTERFACE-LOCATED PROTEIN ELASTIN MICROFIBRIL INTERFACER"/>
    <property type="match status" value="1"/>
</dbReference>
<dbReference type="Pfam" id="PF00386">
    <property type="entry name" value="C1q"/>
    <property type="match status" value="1"/>
</dbReference>
<dbReference type="Pfam" id="PF01391">
    <property type="entry name" value="Collagen"/>
    <property type="match status" value="2"/>
</dbReference>
<dbReference type="PRINTS" id="PR00007">
    <property type="entry name" value="COMPLEMNTC1Q"/>
</dbReference>
<dbReference type="SMART" id="SM00110">
    <property type="entry name" value="C1Q"/>
    <property type="match status" value="1"/>
</dbReference>
<dbReference type="SUPFAM" id="SSF49842">
    <property type="entry name" value="TNF-like"/>
    <property type="match status" value="1"/>
</dbReference>
<dbReference type="PROSITE" id="PS50871">
    <property type="entry name" value="C1Q"/>
    <property type="match status" value="1"/>
</dbReference>
<reference key="1">
    <citation type="journal article" date="1992" name="Eur. J. Biochem.">
        <title>Isolation, sequence analysis and characterization of cDNA clones coding for the C chain of mouse C1q. Sequence similarity of complement subcomponent C1q, collagen type VIII and type X and precerebellin.</title>
        <authorList>
            <person name="Petry F."/>
            <person name="Reid K.B.M."/>
            <person name="Loos M."/>
        </authorList>
    </citation>
    <scope>NUCLEOTIDE SEQUENCE [MRNA]</scope>
    <source>
        <strain>ICR</strain>
        <tissue>Macrophage</tissue>
    </source>
</reference>
<reference key="2">
    <citation type="journal article" date="1996" name="Immunogenetics">
        <title>The mouse C1q genes are clustered on chromosome 4 and show conservation of gene organization.</title>
        <authorList>
            <person name="Petry F."/>
            <person name="McClive P.J."/>
            <person name="Botto M."/>
            <person name="Morley B.J."/>
            <person name="Morahan G."/>
            <person name="Loos M."/>
        </authorList>
    </citation>
    <scope>NUCLEOTIDE SEQUENCE [GENOMIC DNA]</scope>
    <source>
        <strain>BALB/cJ</strain>
        <tissue>Liver</tissue>
    </source>
</reference>
<reference key="3">
    <citation type="journal article" date="2009" name="PLoS Biol.">
        <title>Lineage-specific biology revealed by a finished genome assembly of the mouse.</title>
        <authorList>
            <person name="Church D.M."/>
            <person name="Goodstadt L."/>
            <person name="Hillier L.W."/>
            <person name="Zody M.C."/>
            <person name="Goldstein S."/>
            <person name="She X."/>
            <person name="Bult C.J."/>
            <person name="Agarwala R."/>
            <person name="Cherry J.L."/>
            <person name="DiCuccio M."/>
            <person name="Hlavina W."/>
            <person name="Kapustin Y."/>
            <person name="Meric P."/>
            <person name="Maglott D."/>
            <person name="Birtle Z."/>
            <person name="Marques A.C."/>
            <person name="Graves T."/>
            <person name="Zhou S."/>
            <person name="Teague B."/>
            <person name="Potamousis K."/>
            <person name="Churas C."/>
            <person name="Place M."/>
            <person name="Herschleb J."/>
            <person name="Runnheim R."/>
            <person name="Forrest D."/>
            <person name="Amos-Landgraf J."/>
            <person name="Schwartz D.C."/>
            <person name="Cheng Z."/>
            <person name="Lindblad-Toh K."/>
            <person name="Eichler E.E."/>
            <person name="Ponting C.P."/>
        </authorList>
    </citation>
    <scope>NUCLEOTIDE SEQUENCE [LARGE SCALE GENOMIC DNA]</scope>
    <source>
        <strain>C57BL/6J</strain>
    </source>
</reference>
<reference key="4">
    <citation type="journal article" date="2004" name="Genome Res.">
        <title>The status, quality, and expansion of the NIH full-length cDNA project: the Mammalian Gene Collection (MGC).</title>
        <authorList>
            <consortium name="The MGC Project Team"/>
        </authorList>
    </citation>
    <scope>NUCLEOTIDE SEQUENCE [LARGE SCALE MRNA]</scope>
    <source>
        <strain>Czech II</strain>
        <strain>FVB/N</strain>
        <tissue>Colon</tissue>
        <tissue>Kidney</tissue>
        <tissue>Mammary tumor</tissue>
    </source>
</reference>
<reference key="5">
    <citation type="journal article" date="2010" name="Cell">
        <title>A tissue-specific atlas of mouse protein phosphorylation and expression.</title>
        <authorList>
            <person name="Huttlin E.L."/>
            <person name="Jedrychowski M.P."/>
            <person name="Elias J.E."/>
            <person name="Goswami T."/>
            <person name="Rad R."/>
            <person name="Beausoleil S.A."/>
            <person name="Villen J."/>
            <person name="Haas W."/>
            <person name="Sowa M.E."/>
            <person name="Gygi S.P."/>
        </authorList>
    </citation>
    <scope>IDENTIFICATION BY MASS SPECTROMETRY [LARGE SCALE ANALYSIS]</scope>
    <source>
        <tissue>Heart</tissue>
    </source>
</reference>
<keyword id="KW-0176">Collagen</keyword>
<keyword id="KW-0180">Complement pathway</keyword>
<keyword id="KW-1015">Disulfide bond</keyword>
<keyword id="KW-0325">Glycoprotein</keyword>
<keyword id="KW-0379">Hydroxylation</keyword>
<keyword id="KW-0391">Immunity</keyword>
<keyword id="KW-0399">Innate immunity</keyword>
<keyword id="KW-1185">Reference proteome</keyword>
<keyword id="KW-0677">Repeat</keyword>
<keyword id="KW-0964">Secreted</keyword>
<keyword id="KW-0732">Signal</keyword>
<gene>
    <name evidence="5" type="primary">C1qc</name>
    <name type="synonym">C1qg</name>
</gene>
<accession>Q02105</accession>
<accession>Q6DI63</accession>
<evidence type="ECO:0000250" key="1">
    <source>
        <dbReference type="UniProtKB" id="P02747"/>
    </source>
</evidence>
<evidence type="ECO:0000255" key="2">
    <source>
        <dbReference type="PROSITE-ProRule" id="PRU00368"/>
    </source>
</evidence>
<evidence type="ECO:0000256" key="3">
    <source>
        <dbReference type="SAM" id="MobiDB-lite"/>
    </source>
</evidence>
<evidence type="ECO:0000305" key="4"/>
<evidence type="ECO:0000312" key="5">
    <source>
        <dbReference type="MGI" id="MGI:88225"/>
    </source>
</evidence>
<name>C1QC_MOUSE</name>
<comment type="function">
    <text evidence="1">Core component of the complement C1 complex, a multiprotein complex that initiates the classical pathway of the complement system, a cascade of proteins that leads to phagocytosis and breakdown of pathogens and signaling that strengthens the adaptive immune system. The classical complement pathway is initiated by the C1Q subcomplex of the C1 complex, which specifically binds IgG or IgM immunoglobulins complexed with antigens, forming antigen-antibody complexes on the surface of pathogens: C1QA, together with C1QB and C1QC, specifically recognizes and binds the Fc regions of IgG or IgM via its C1q domain. Immunoglobulin-binding activates the proenzyme C1R, which cleaves C1S, initiating the proteolytic cascade of the complement system. The C1Q subcomplex is activated by a hexamer of IgG complexed with antigens, while it is activated by a pentameric IgM. The C1Q subcomplex also recognizes and binds phosphatidylserine exposed on the surface of cells undergoing programmed cell death, possibly promoting activation of the complement system.</text>
</comment>
<comment type="activity regulation">
    <text evidence="1">The C1Q subcomplex is inhibited by sulfated molecules, such as triterpenoid sulfates, heparan sulfate, or chondroitin sulfates.</text>
</comment>
<comment type="subunit">
    <text evidence="1">Core component of the complement C1 complex, a calcium-dependent complex composed of 1 molecule of the C1Q subcomplex, 2 molecules of C1R and 2 molecules of C1S. The C1Q subcomplex is composed 18 subunits: 3 chains of C1QA, C1QB, and C1QC trimerize to form 6 collagen-like triple helices connected to six globular ligand-recognition modules (C1q domain).</text>
</comment>
<comment type="subcellular location">
    <subcellularLocation>
        <location evidence="1">Secreted</location>
    </subcellularLocation>
    <subcellularLocation>
        <location evidence="1">Cell surface</location>
    </subcellularLocation>
    <text evidence="1">Specifically binds IgG or IgM immunoglobulins complexed with antigens, forming antigen-antibody complexes on the surface of pathogens.</text>
</comment>
<comment type="domain">
    <text evidence="1">The C1q domain is the ligand-recognition domain, which specifically recognizes and binds the Fc regions of IgG or IgM immunoglobulins.</text>
</comment>
<comment type="domain">
    <text evidence="1">The collagen-like domain interacts with C1R and C1S proenzymes.</text>
</comment>
<comment type="PTM">
    <text evidence="1">O-linked glycans consist of Glc-Gal disaccharides bound to the oxygen atom of post-translationally added hydroxyl groups.</text>
</comment>
<organism>
    <name type="scientific">Mus musculus</name>
    <name type="common">Mouse</name>
    <dbReference type="NCBI Taxonomy" id="10090"/>
    <lineage>
        <taxon>Eukaryota</taxon>
        <taxon>Metazoa</taxon>
        <taxon>Chordata</taxon>
        <taxon>Craniata</taxon>
        <taxon>Vertebrata</taxon>
        <taxon>Euteleostomi</taxon>
        <taxon>Mammalia</taxon>
        <taxon>Eutheria</taxon>
        <taxon>Euarchontoglires</taxon>
        <taxon>Glires</taxon>
        <taxon>Rodentia</taxon>
        <taxon>Myomorpha</taxon>
        <taxon>Muroidea</taxon>
        <taxon>Muridae</taxon>
        <taxon>Murinae</taxon>
        <taxon>Mus</taxon>
        <taxon>Mus</taxon>
    </lineage>
</organism>
<sequence>MVVGPSCQPPCGLCLLLLFLLALPLRSQASAGCYGIPGMPGMPGAPGKDGHDGLQGPKGEPGIPAVPGTRGPKGQKGEPGMPGHRGKNGPRGTSGLPGDPGPRGPPGEPGVEGRYKQKHQSVFTVTRQTTQYPEANALVRFNSVVTNPQGHYNPSTGKFTCEVPGLYYFVYYTSHTANLCVHLNLNLARVASFCDHMFNSKQVSSGGVLLRLQRGDEVWLSVNDYNGMVGIEGSNSVFSGFLLFPD</sequence>